<reference key="1">
    <citation type="submission" date="2007-11" db="EMBL/GenBank/DDBJ databases">
        <authorList>
            <consortium name="The Salmonella enterica serovar Arizonae Genome Sequencing Project"/>
            <person name="McClelland M."/>
            <person name="Sanderson E.K."/>
            <person name="Porwollik S."/>
            <person name="Spieth J."/>
            <person name="Clifton W.S."/>
            <person name="Fulton R."/>
            <person name="Chunyan W."/>
            <person name="Wollam A."/>
            <person name="Shah N."/>
            <person name="Pepin K."/>
            <person name="Bhonagiri V."/>
            <person name="Nash W."/>
            <person name="Johnson M."/>
            <person name="Thiruvilangam P."/>
            <person name="Wilson R."/>
        </authorList>
    </citation>
    <scope>NUCLEOTIDE SEQUENCE [LARGE SCALE GENOMIC DNA]</scope>
    <source>
        <strain>ATCC BAA-731 / CDC346-86 / RSK2980</strain>
    </source>
</reference>
<name>YCAD_SALAR</name>
<protein>
    <recommendedName>
        <fullName evidence="1">Uncharacterized MFS-type transporter YcaD</fullName>
    </recommendedName>
</protein>
<sequence length="382" mass="41553">MSTYTRPVKLLLCGLLLLTLAIAVLNTLVPLWLAQASLPTWQVGMVSSSYFTGNLVGTLFTGYLIKRIGFNRSYYLASLIFAAGCVGLGVMVGFWSWMSWRFIAGIGCAMIWVVVESALMCSGTSHNRGRLLAAYMMVYYVGTFLGQLLVSKVSGELLHVLPWVTGMILAGILPLLFTRIVNQQTEARYSTSISAMLKLRQARLGVNGCIISGIVLGSLYGLMPLYLKHQGMANASIGFWMAVLVSAGILGQWPVGRLADKFGRLLVLRVQVFVVILGSIVMLTQAAMAPALFILGAAGFTLYPVAMAWACEKVEHHQLVAMNQALLLSYTVGSLLGPSFTAMLMQNYSDNLLFLMIASVSFIYLLMLLRNAGQTPNPVAHI</sequence>
<feature type="chain" id="PRO_1000085095" description="Uncharacterized MFS-type transporter YcaD">
    <location>
        <begin position="1"/>
        <end position="382"/>
    </location>
</feature>
<feature type="transmembrane region" description="Helical" evidence="1">
    <location>
        <begin position="14"/>
        <end position="34"/>
    </location>
</feature>
<feature type="transmembrane region" description="Helical" evidence="1">
    <location>
        <begin position="45"/>
        <end position="65"/>
    </location>
</feature>
<feature type="transmembrane region" description="Helical" evidence="1">
    <location>
        <begin position="75"/>
        <end position="95"/>
    </location>
</feature>
<feature type="transmembrane region" description="Helical" evidence="1">
    <location>
        <begin position="102"/>
        <end position="122"/>
    </location>
</feature>
<feature type="transmembrane region" description="Helical" evidence="1">
    <location>
        <begin position="131"/>
        <end position="151"/>
    </location>
</feature>
<feature type="transmembrane region" description="Helical" evidence="1">
    <location>
        <begin position="157"/>
        <end position="177"/>
    </location>
</feature>
<feature type="transmembrane region" description="Helical" evidence="1">
    <location>
        <begin position="204"/>
        <end position="224"/>
    </location>
</feature>
<feature type="transmembrane region" description="Helical" evidence="1">
    <location>
        <begin position="235"/>
        <end position="255"/>
    </location>
</feature>
<feature type="transmembrane region" description="Helical" evidence="1">
    <location>
        <begin position="265"/>
        <end position="284"/>
    </location>
</feature>
<feature type="transmembrane region" description="Helical" evidence="1">
    <location>
        <begin position="289"/>
        <end position="311"/>
    </location>
</feature>
<feature type="transmembrane region" description="Helical" evidence="1">
    <location>
        <begin position="325"/>
        <end position="345"/>
    </location>
</feature>
<feature type="transmembrane region" description="Helical" evidence="1">
    <location>
        <begin position="349"/>
        <end position="369"/>
    </location>
</feature>
<proteinExistence type="inferred from homology"/>
<evidence type="ECO:0000255" key="1">
    <source>
        <dbReference type="HAMAP-Rule" id="MF_01149"/>
    </source>
</evidence>
<dbReference type="EMBL" id="CP000880">
    <property type="protein sequence ID" value="ABX21875.1"/>
    <property type="molecule type" value="Genomic_DNA"/>
</dbReference>
<dbReference type="SMR" id="A9MHY5"/>
<dbReference type="STRING" id="41514.SARI_01995"/>
<dbReference type="KEGG" id="ses:SARI_01995"/>
<dbReference type="HOGENOM" id="CLU_035018_1_2_6"/>
<dbReference type="Proteomes" id="UP000002084">
    <property type="component" value="Chromosome"/>
</dbReference>
<dbReference type="GO" id="GO:0005886">
    <property type="term" value="C:plasma membrane"/>
    <property type="evidence" value="ECO:0007669"/>
    <property type="project" value="UniProtKB-SubCell"/>
</dbReference>
<dbReference type="GO" id="GO:0022857">
    <property type="term" value="F:transmembrane transporter activity"/>
    <property type="evidence" value="ECO:0007669"/>
    <property type="project" value="UniProtKB-UniRule"/>
</dbReference>
<dbReference type="CDD" id="cd17477">
    <property type="entry name" value="MFS_YcaD_like"/>
    <property type="match status" value="1"/>
</dbReference>
<dbReference type="FunFam" id="1.20.1250.20:FF:000041">
    <property type="entry name" value="Uncharacterized MFS-type transporter YcaD"/>
    <property type="match status" value="1"/>
</dbReference>
<dbReference type="FunFam" id="1.20.1250.20:FF:000066">
    <property type="entry name" value="Uncharacterized MFS-type transporter YcaD"/>
    <property type="match status" value="1"/>
</dbReference>
<dbReference type="Gene3D" id="1.20.1250.20">
    <property type="entry name" value="MFS general substrate transporter like domains"/>
    <property type="match status" value="2"/>
</dbReference>
<dbReference type="HAMAP" id="MF_01149">
    <property type="entry name" value="MFS_YcaD"/>
    <property type="match status" value="1"/>
</dbReference>
<dbReference type="InterPro" id="IPR011701">
    <property type="entry name" value="MFS"/>
</dbReference>
<dbReference type="InterPro" id="IPR020846">
    <property type="entry name" value="MFS_dom"/>
</dbReference>
<dbReference type="InterPro" id="IPR036259">
    <property type="entry name" value="MFS_trans_sf"/>
</dbReference>
<dbReference type="InterPro" id="IPR023745">
    <property type="entry name" value="MFS_YcaD"/>
</dbReference>
<dbReference type="InterPro" id="IPR047200">
    <property type="entry name" value="MFS_YcaD-like"/>
</dbReference>
<dbReference type="NCBIfam" id="NF002962">
    <property type="entry name" value="PRK03633.1"/>
    <property type="match status" value="1"/>
</dbReference>
<dbReference type="PANTHER" id="PTHR23521">
    <property type="entry name" value="TRANSPORTER MFS SUPERFAMILY"/>
    <property type="match status" value="1"/>
</dbReference>
<dbReference type="PANTHER" id="PTHR23521:SF2">
    <property type="entry name" value="TRANSPORTER MFS SUPERFAMILY"/>
    <property type="match status" value="1"/>
</dbReference>
<dbReference type="Pfam" id="PF07690">
    <property type="entry name" value="MFS_1"/>
    <property type="match status" value="1"/>
</dbReference>
<dbReference type="SUPFAM" id="SSF103473">
    <property type="entry name" value="MFS general substrate transporter"/>
    <property type="match status" value="1"/>
</dbReference>
<dbReference type="PROSITE" id="PS50850">
    <property type="entry name" value="MFS"/>
    <property type="match status" value="1"/>
</dbReference>
<organism>
    <name type="scientific">Salmonella arizonae (strain ATCC BAA-731 / CDC346-86 / RSK2980)</name>
    <dbReference type="NCBI Taxonomy" id="41514"/>
    <lineage>
        <taxon>Bacteria</taxon>
        <taxon>Pseudomonadati</taxon>
        <taxon>Pseudomonadota</taxon>
        <taxon>Gammaproteobacteria</taxon>
        <taxon>Enterobacterales</taxon>
        <taxon>Enterobacteriaceae</taxon>
        <taxon>Salmonella</taxon>
    </lineage>
</organism>
<gene>
    <name evidence="1" type="primary">ycaD</name>
    <name type="ordered locus">SARI_01995</name>
</gene>
<keyword id="KW-0997">Cell inner membrane</keyword>
<keyword id="KW-1003">Cell membrane</keyword>
<keyword id="KW-0472">Membrane</keyword>
<keyword id="KW-1185">Reference proteome</keyword>
<keyword id="KW-0812">Transmembrane</keyword>
<keyword id="KW-1133">Transmembrane helix</keyword>
<keyword id="KW-0813">Transport</keyword>
<accession>A9MHY5</accession>
<comment type="subcellular location">
    <subcellularLocation>
        <location evidence="1">Cell inner membrane</location>
        <topology evidence="1">Multi-pass membrane protein</topology>
    </subcellularLocation>
</comment>
<comment type="similarity">
    <text evidence="1">Belongs to the major facilitator superfamily. YcaD (TC 2.A.1.26) family.</text>
</comment>